<protein>
    <recommendedName>
        <fullName>Forkhead box protein B1</fullName>
        <shortName>FoxB1</shortName>
    </recommendedName>
    <alternativeName>
        <fullName>Transcription factor FKH-5</fullName>
    </alternativeName>
</protein>
<comment type="function">
    <text evidence="4 5">Probable transcription factor. May be involved in the early anteroposterior patterning of the neuroectoderm.</text>
</comment>
<comment type="subcellular location">
    <subcellularLocation>
        <location evidence="1 8">Nucleus</location>
    </subcellularLocation>
</comment>
<comment type="tissue specificity">
    <text evidence="4">In early gastrulae, expressed in the inner layer of the posterior dorsal ectoderm and in non-involuted mesoderm. By the mid-gastrula stage, expressed solely in the posterior ectoderm. At the end of gastrulation, expressed in ectodermal regions fated to become diencephalon, midbrain and hindbrain, and weakly expressed in regions fated to become spinal cord and tailbud. At the neurula stage, expressed in the midbrain and posterior forebrain (diencephalon) but not in the more anterior forebrain (telencephalon). Also expressed posteriorly in rhombomere 5. At tailbud stages, expression remains in the anterior brain and is also detectable along the length of the central nervous system and in the tailbud.</text>
</comment>
<comment type="developmental stage">
    <text evidence="4">Expression begins in early gastrula stage embryos, peaks at the mid-gastrula stage and remains detectable until late tailbud.</text>
</comment>
<comment type="induction">
    <text evidence="4">By FGF signaling.</text>
</comment>
<gene>
    <name evidence="7" type="primary">foxb1</name>
    <name evidence="6" type="synonym">fkh5</name>
</gene>
<evidence type="ECO:0000255" key="1"/>
<evidence type="ECO:0000255" key="2">
    <source>
        <dbReference type="PROSITE-ProRule" id="PRU00089"/>
    </source>
</evidence>
<evidence type="ECO:0000256" key="3">
    <source>
        <dbReference type="SAM" id="MobiDB-lite"/>
    </source>
</evidence>
<evidence type="ECO:0000269" key="4">
    <source>
    </source>
</evidence>
<evidence type="ECO:0000269" key="5">
    <source>
    </source>
</evidence>
<evidence type="ECO:0000303" key="6">
    <source>
    </source>
</evidence>
<evidence type="ECO:0000303" key="7">
    <source>
    </source>
</evidence>
<evidence type="ECO:0000305" key="8"/>
<evidence type="ECO:0000312" key="9">
    <source>
        <dbReference type="EMBL" id="AAC62623.1"/>
    </source>
</evidence>
<dbReference type="EMBL" id="AF064810">
    <property type="protein sequence ID" value="AAC62623.1"/>
    <property type="molecule type" value="mRNA"/>
</dbReference>
<dbReference type="EMBL" id="BC124883">
    <property type="protein sequence ID" value="AAI24884.1"/>
    <property type="molecule type" value="mRNA"/>
</dbReference>
<dbReference type="RefSeq" id="NP_001081836.1">
    <property type="nucleotide sequence ID" value="NM_001088367.1"/>
</dbReference>
<dbReference type="SMR" id="O93529"/>
<dbReference type="GeneID" id="398078"/>
<dbReference type="KEGG" id="xla:398078"/>
<dbReference type="AGR" id="Xenbase:XB-GENE-1018260"/>
<dbReference type="CTD" id="398078"/>
<dbReference type="Xenbase" id="XB-GENE-1018260">
    <property type="gene designation" value="foxb1.S"/>
</dbReference>
<dbReference type="OMA" id="GMMDTAA"/>
<dbReference type="OrthoDB" id="5954824at2759"/>
<dbReference type="Proteomes" id="UP000186698">
    <property type="component" value="Chromosome 3S"/>
</dbReference>
<dbReference type="GO" id="GO:0005634">
    <property type="term" value="C:nucleus"/>
    <property type="evidence" value="ECO:0000250"/>
    <property type="project" value="UniProtKB"/>
</dbReference>
<dbReference type="GO" id="GO:0003677">
    <property type="term" value="F:DNA binding"/>
    <property type="evidence" value="ECO:0000303"/>
    <property type="project" value="UniProtKB"/>
</dbReference>
<dbReference type="GO" id="GO:0003700">
    <property type="term" value="F:DNA-binding transcription factor activity"/>
    <property type="evidence" value="ECO:0000303"/>
    <property type="project" value="UniProtKB"/>
</dbReference>
<dbReference type="GO" id="GO:0000981">
    <property type="term" value="F:DNA-binding transcription factor activity, RNA polymerase II-specific"/>
    <property type="evidence" value="ECO:0000318"/>
    <property type="project" value="GO_Central"/>
</dbReference>
<dbReference type="GO" id="GO:0000978">
    <property type="term" value="F:RNA polymerase II cis-regulatory region sequence-specific DNA binding"/>
    <property type="evidence" value="ECO:0000318"/>
    <property type="project" value="GO_Central"/>
</dbReference>
<dbReference type="GO" id="GO:0043565">
    <property type="term" value="F:sequence-specific DNA binding"/>
    <property type="evidence" value="ECO:0000250"/>
    <property type="project" value="UniProtKB"/>
</dbReference>
<dbReference type="GO" id="GO:0009653">
    <property type="term" value="P:anatomical structure morphogenesis"/>
    <property type="evidence" value="ECO:0000318"/>
    <property type="project" value="GO_Central"/>
</dbReference>
<dbReference type="GO" id="GO:0007412">
    <property type="term" value="P:axon target recognition"/>
    <property type="evidence" value="ECO:0000250"/>
    <property type="project" value="UniProtKB"/>
</dbReference>
<dbReference type="GO" id="GO:0030154">
    <property type="term" value="P:cell differentiation"/>
    <property type="evidence" value="ECO:0000318"/>
    <property type="project" value="GO_Central"/>
</dbReference>
<dbReference type="GO" id="GO:0061381">
    <property type="term" value="P:cell migration in diencephalon"/>
    <property type="evidence" value="ECO:0000250"/>
    <property type="project" value="UniProtKB"/>
</dbReference>
<dbReference type="GO" id="GO:0007398">
    <property type="term" value="P:ectoderm development"/>
    <property type="evidence" value="ECO:0000270"/>
    <property type="project" value="UniProtKB"/>
</dbReference>
<dbReference type="GO" id="GO:0033504">
    <property type="term" value="P:floor plate development"/>
    <property type="evidence" value="ECO:0000250"/>
    <property type="project" value="UniProtKB"/>
</dbReference>
<dbReference type="GO" id="GO:0021855">
    <property type="term" value="P:hypothalamus cell migration"/>
    <property type="evidence" value="ECO:0000250"/>
    <property type="project" value="UniProtKB"/>
</dbReference>
<dbReference type="GO" id="GO:0061379">
    <property type="term" value="P:inferior colliculus development"/>
    <property type="evidence" value="ECO:0000250"/>
    <property type="project" value="UniProtKB"/>
</dbReference>
<dbReference type="GO" id="GO:0021767">
    <property type="term" value="P:mammillary body development"/>
    <property type="evidence" value="ECO:0000250"/>
    <property type="project" value="UniProtKB"/>
</dbReference>
<dbReference type="GO" id="GO:0061374">
    <property type="term" value="P:mammillothalamic axonal tract development"/>
    <property type="evidence" value="ECO:0000250"/>
    <property type="project" value="UniProtKB"/>
</dbReference>
<dbReference type="GO" id="GO:0030901">
    <property type="term" value="P:midbrain development"/>
    <property type="evidence" value="ECO:0000250"/>
    <property type="project" value="UniProtKB"/>
</dbReference>
<dbReference type="GO" id="GO:0043524">
    <property type="term" value="P:negative regulation of neuron apoptotic process"/>
    <property type="evidence" value="ECO:0000250"/>
    <property type="project" value="UniProtKB"/>
</dbReference>
<dbReference type="GO" id="GO:0022008">
    <property type="term" value="P:neurogenesis"/>
    <property type="evidence" value="ECO:0000270"/>
    <property type="project" value="UniProtKB"/>
</dbReference>
<dbReference type="GO" id="GO:0006355">
    <property type="term" value="P:regulation of DNA-templated transcription"/>
    <property type="evidence" value="ECO:0000303"/>
    <property type="project" value="UniProtKB"/>
</dbReference>
<dbReference type="GO" id="GO:0006357">
    <property type="term" value="P:regulation of transcription by RNA polymerase II"/>
    <property type="evidence" value="ECO:0000318"/>
    <property type="project" value="GO_Central"/>
</dbReference>
<dbReference type="GO" id="GO:0001756">
    <property type="term" value="P:somitogenesis"/>
    <property type="evidence" value="ECO:0000250"/>
    <property type="project" value="UniProtKB"/>
</dbReference>
<dbReference type="GO" id="GO:0022029">
    <property type="term" value="P:telencephalon cell migration"/>
    <property type="evidence" value="ECO:0000250"/>
    <property type="project" value="UniProtKB"/>
</dbReference>
<dbReference type="GO" id="GO:0008542">
    <property type="term" value="P:visual learning"/>
    <property type="evidence" value="ECO:0000250"/>
    <property type="project" value="UniProtKB"/>
</dbReference>
<dbReference type="CDD" id="cd20043">
    <property type="entry name" value="FH_FOXB2"/>
    <property type="match status" value="1"/>
</dbReference>
<dbReference type="FunFam" id="1.10.10.10:FF:000082">
    <property type="entry name" value="forkhead box protein B2"/>
    <property type="match status" value="1"/>
</dbReference>
<dbReference type="Gene3D" id="1.10.10.10">
    <property type="entry name" value="Winged helix-like DNA-binding domain superfamily/Winged helix DNA-binding domain"/>
    <property type="match status" value="1"/>
</dbReference>
<dbReference type="InterPro" id="IPR001766">
    <property type="entry name" value="Fork_head_dom"/>
</dbReference>
<dbReference type="InterPro" id="IPR050211">
    <property type="entry name" value="FOX_domain-containing"/>
</dbReference>
<dbReference type="InterPro" id="IPR047389">
    <property type="entry name" value="FOXB1_B2_FH"/>
</dbReference>
<dbReference type="InterPro" id="IPR018122">
    <property type="entry name" value="TF_fork_head_CS_1"/>
</dbReference>
<dbReference type="InterPro" id="IPR030456">
    <property type="entry name" value="TF_fork_head_CS_2"/>
</dbReference>
<dbReference type="InterPro" id="IPR036388">
    <property type="entry name" value="WH-like_DNA-bd_sf"/>
</dbReference>
<dbReference type="InterPro" id="IPR036390">
    <property type="entry name" value="WH_DNA-bd_sf"/>
</dbReference>
<dbReference type="PANTHER" id="PTHR11829">
    <property type="entry name" value="FORKHEAD BOX PROTEIN"/>
    <property type="match status" value="1"/>
</dbReference>
<dbReference type="PANTHER" id="PTHR11829:SF209">
    <property type="entry name" value="FORKHEAD BOX PROTEIN B1"/>
    <property type="match status" value="1"/>
</dbReference>
<dbReference type="Pfam" id="PF00250">
    <property type="entry name" value="Forkhead"/>
    <property type="match status" value="1"/>
</dbReference>
<dbReference type="PRINTS" id="PR00053">
    <property type="entry name" value="FORKHEAD"/>
</dbReference>
<dbReference type="SMART" id="SM00339">
    <property type="entry name" value="FH"/>
    <property type="match status" value="1"/>
</dbReference>
<dbReference type="SUPFAM" id="SSF46785">
    <property type="entry name" value="Winged helix' DNA-binding domain"/>
    <property type="match status" value="1"/>
</dbReference>
<dbReference type="PROSITE" id="PS00657">
    <property type="entry name" value="FORK_HEAD_1"/>
    <property type="match status" value="1"/>
</dbReference>
<dbReference type="PROSITE" id="PS00658">
    <property type="entry name" value="FORK_HEAD_2"/>
    <property type="match status" value="1"/>
</dbReference>
<dbReference type="PROSITE" id="PS50039">
    <property type="entry name" value="FORK_HEAD_3"/>
    <property type="match status" value="1"/>
</dbReference>
<feature type="chain" id="PRO_0000257998" description="Forkhead box protein B1">
    <location>
        <begin position="1"/>
        <end position="319"/>
    </location>
</feature>
<feature type="DNA-binding region" description="Fork-head" evidence="2">
    <location>
        <begin position="13"/>
        <end position="107"/>
    </location>
</feature>
<feature type="region of interest" description="Disordered" evidence="3">
    <location>
        <begin position="278"/>
        <end position="310"/>
    </location>
</feature>
<feature type="compositionally biased region" description="Low complexity" evidence="3">
    <location>
        <begin position="279"/>
        <end position="305"/>
    </location>
</feature>
<organism>
    <name type="scientific">Xenopus laevis</name>
    <name type="common">African clawed frog</name>
    <dbReference type="NCBI Taxonomy" id="8355"/>
    <lineage>
        <taxon>Eukaryota</taxon>
        <taxon>Metazoa</taxon>
        <taxon>Chordata</taxon>
        <taxon>Craniata</taxon>
        <taxon>Vertebrata</taxon>
        <taxon>Euteleostomi</taxon>
        <taxon>Amphibia</taxon>
        <taxon>Batrachia</taxon>
        <taxon>Anura</taxon>
        <taxon>Pipoidea</taxon>
        <taxon>Pipidae</taxon>
        <taxon>Xenopodinae</taxon>
        <taxon>Xenopus</taxon>
        <taxon>Xenopus</taxon>
    </lineage>
</organism>
<keyword id="KW-0217">Developmental protein</keyword>
<keyword id="KW-0221">Differentiation</keyword>
<keyword id="KW-0238">DNA-binding</keyword>
<keyword id="KW-0524">Neurogenesis</keyword>
<keyword id="KW-0539">Nucleus</keyword>
<keyword id="KW-1185">Reference proteome</keyword>
<keyword id="KW-0804">Transcription</keyword>
<keyword id="KW-0805">Transcription regulation</keyword>
<proteinExistence type="evidence at transcript level"/>
<accession>O93529</accession>
<name>FOXB1_XENLA</name>
<reference evidence="8 9" key="1">
    <citation type="journal article" date="2001" name="Mech. Dev.">
        <title>Early anteroposterior division of the presumptive neurectoderm in Xenopus.</title>
        <authorList>
            <person name="Gamse J.T."/>
            <person name="Sive H."/>
        </authorList>
    </citation>
    <scope>NUCLEOTIDE SEQUENCE [MRNA]</scope>
    <scope>FUNCTION</scope>
    <scope>TISSUE SPECIFICITY</scope>
    <scope>DEVELOPMENTAL STAGE</scope>
    <scope>INDUCTION</scope>
    <source>
        <tissue evidence="4">Ectoderm</tissue>
        <tissue evidence="4">Gastrula</tissue>
    </source>
</reference>
<reference key="2">
    <citation type="submission" date="2006-10" db="EMBL/GenBank/DDBJ databases">
        <authorList>
            <consortium name="NIH - Xenopus Gene Collection (XGC) project"/>
        </authorList>
    </citation>
    <scope>NUCLEOTIDE SEQUENCE [LARGE SCALE MRNA]</scope>
    <source>
        <tissue>Embryo</tissue>
    </source>
</reference>
<reference evidence="8" key="3">
    <citation type="journal article" date="2005" name="Gene">
        <title>Of fox and frogs: fox (fork head/winged helix) transcription factors in Xenopus development.</title>
        <authorList>
            <person name="Pohl B.S."/>
            <person name="Knoechel W."/>
        </authorList>
    </citation>
    <scope>REVIEW</scope>
</reference>
<sequence>MPRPGRNTYSDQKPPYSYISLTAMAIQGSQEKMLPLSEIYKFIMDRFPYYRENTQRWQNSLRHNLSFNDCFIKIPRRPDQPGKGSFWALHPRCGDMFENGSFLRRRKRFKVMKSDHLAPSKASDAAQYLQQQAKLRLSALAASGTHLPPMSTYNLGVSPTSSFKHPFAIENIIAREYKMPGGLAFSTMQPMPAAYPLHNQLTTVGGSIGTGWPHMYSSSMLDSTTPISMANSDYSVSAYGVPIKPICHGAQTLLPAIPVPIKPTAALPALPTHIPAILSNSSPSMSPTSPQTATSQSSPATPSDTLTNPSTALLSVAVH</sequence>